<comment type="function">
    <text evidence="1">Involved in the biosynthesis of the chorismate, which leads to the biosynthesis of aromatic amino acids. Catalyzes the reversible NADPH linked reduction of 3-dehydroshikimate (DHSA) to yield shikimate (SA).</text>
</comment>
<comment type="catalytic activity">
    <reaction evidence="1">
        <text>shikimate + NADP(+) = 3-dehydroshikimate + NADPH + H(+)</text>
        <dbReference type="Rhea" id="RHEA:17737"/>
        <dbReference type="ChEBI" id="CHEBI:15378"/>
        <dbReference type="ChEBI" id="CHEBI:16630"/>
        <dbReference type="ChEBI" id="CHEBI:36208"/>
        <dbReference type="ChEBI" id="CHEBI:57783"/>
        <dbReference type="ChEBI" id="CHEBI:58349"/>
        <dbReference type="EC" id="1.1.1.25"/>
    </reaction>
</comment>
<comment type="pathway">
    <text evidence="1">Metabolic intermediate biosynthesis; chorismate biosynthesis; chorismate from D-erythrose 4-phosphate and phosphoenolpyruvate: step 4/7.</text>
</comment>
<comment type="subunit">
    <text evidence="1">Homodimer.</text>
</comment>
<comment type="similarity">
    <text evidence="1">Belongs to the shikimate dehydrogenase family.</text>
</comment>
<gene>
    <name evidence="1" type="primary">aroE</name>
    <name type="ordered locus">spr1234</name>
</gene>
<protein>
    <recommendedName>
        <fullName evidence="1">Shikimate dehydrogenase (NADP(+))</fullName>
        <shortName evidence="1">SDH</shortName>
        <ecNumber evidence="1">1.1.1.25</ecNumber>
    </recommendedName>
</protein>
<keyword id="KW-0028">Amino-acid biosynthesis</keyword>
<keyword id="KW-0057">Aromatic amino acid biosynthesis</keyword>
<keyword id="KW-0521">NADP</keyword>
<keyword id="KW-0560">Oxidoreductase</keyword>
<keyword id="KW-1185">Reference proteome</keyword>
<accession>P63596</accession>
<accession>Q97Q55</accession>
<sequence>MKLDGYTRLAAVVANPIKHSISPFIHNRAFEATATNGAYVAWEIEASDLVETVANIRRYQMFGINLSMPYKEQVIPYLDKLSDEARLIGAVNTVVNENGNLIGYNTDGKGFFKCLPSFTISGKKMTLLGAGGAAKSILAQAILDGVSQISVFVRSVSMEKTRPYLDKLQEQTGFKVDLCALEYVSELQARIAESDLLVNATSVGMDGQSSPVPENIVLPETLLVADIIYQPFETPFLKWARSQGNPAVNGLGMLLYQAAEAFQLWTGKEMPTEEIWQSLTEKYQ</sequence>
<feature type="chain" id="PRO_0000136039" description="Shikimate dehydrogenase (NADP(+))">
    <location>
        <begin position="1"/>
        <end position="284"/>
    </location>
</feature>
<feature type="active site" description="Proton acceptor" evidence="1">
    <location>
        <position position="71"/>
    </location>
</feature>
<feature type="binding site" evidence="1">
    <location>
        <begin position="20"/>
        <end position="22"/>
    </location>
    <ligand>
        <name>shikimate</name>
        <dbReference type="ChEBI" id="CHEBI:36208"/>
    </ligand>
</feature>
<feature type="binding site" evidence="1">
    <location>
        <position position="67"/>
    </location>
    <ligand>
        <name>shikimate</name>
        <dbReference type="ChEBI" id="CHEBI:36208"/>
    </ligand>
</feature>
<feature type="binding site" evidence="1">
    <location>
        <position position="83"/>
    </location>
    <ligand>
        <name>NADP(+)</name>
        <dbReference type="ChEBI" id="CHEBI:58349"/>
    </ligand>
</feature>
<feature type="binding site" evidence="1">
    <location>
        <position position="92"/>
    </location>
    <ligand>
        <name>shikimate</name>
        <dbReference type="ChEBI" id="CHEBI:36208"/>
    </ligand>
</feature>
<feature type="binding site" evidence="1">
    <location>
        <position position="107"/>
    </location>
    <ligand>
        <name>shikimate</name>
        <dbReference type="ChEBI" id="CHEBI:36208"/>
    </ligand>
</feature>
<feature type="binding site" evidence="1">
    <location>
        <begin position="129"/>
        <end position="133"/>
    </location>
    <ligand>
        <name>NADP(+)</name>
        <dbReference type="ChEBI" id="CHEBI:58349"/>
    </ligand>
</feature>
<feature type="binding site" evidence="1">
    <location>
        <position position="227"/>
    </location>
    <ligand>
        <name>NADP(+)</name>
        <dbReference type="ChEBI" id="CHEBI:58349"/>
    </ligand>
</feature>
<feature type="binding site" evidence="1">
    <location>
        <position position="229"/>
    </location>
    <ligand>
        <name>shikimate</name>
        <dbReference type="ChEBI" id="CHEBI:36208"/>
    </ligand>
</feature>
<feature type="binding site" evidence="1">
    <location>
        <position position="250"/>
    </location>
    <ligand>
        <name>NADP(+)</name>
        <dbReference type="ChEBI" id="CHEBI:58349"/>
    </ligand>
</feature>
<dbReference type="EC" id="1.1.1.25" evidence="1"/>
<dbReference type="EMBL" id="AE007317">
    <property type="protein sequence ID" value="AAL00038.1"/>
    <property type="molecule type" value="Genomic_DNA"/>
</dbReference>
<dbReference type="PIR" id="A98026">
    <property type="entry name" value="A98026"/>
</dbReference>
<dbReference type="RefSeq" id="NP_358827.1">
    <property type="nucleotide sequence ID" value="NC_003098.1"/>
</dbReference>
<dbReference type="RefSeq" id="WP_000762485.1">
    <property type="nucleotide sequence ID" value="NC_003098.1"/>
</dbReference>
<dbReference type="SMR" id="P63596"/>
<dbReference type="STRING" id="171101.spr1234"/>
<dbReference type="KEGG" id="spr:spr1234"/>
<dbReference type="PATRIC" id="fig|171101.6.peg.1340"/>
<dbReference type="eggNOG" id="COG0169">
    <property type="taxonomic scope" value="Bacteria"/>
</dbReference>
<dbReference type="HOGENOM" id="CLU_044063_4_4_9"/>
<dbReference type="UniPathway" id="UPA00053">
    <property type="reaction ID" value="UER00087"/>
</dbReference>
<dbReference type="Proteomes" id="UP000000586">
    <property type="component" value="Chromosome"/>
</dbReference>
<dbReference type="GO" id="GO:0050661">
    <property type="term" value="F:NADP binding"/>
    <property type="evidence" value="ECO:0007669"/>
    <property type="project" value="InterPro"/>
</dbReference>
<dbReference type="GO" id="GO:0004764">
    <property type="term" value="F:shikimate 3-dehydrogenase (NADP+) activity"/>
    <property type="evidence" value="ECO:0000318"/>
    <property type="project" value="GO_Central"/>
</dbReference>
<dbReference type="GO" id="GO:0008652">
    <property type="term" value="P:amino acid biosynthetic process"/>
    <property type="evidence" value="ECO:0007669"/>
    <property type="project" value="UniProtKB-KW"/>
</dbReference>
<dbReference type="GO" id="GO:0009073">
    <property type="term" value="P:aromatic amino acid family biosynthetic process"/>
    <property type="evidence" value="ECO:0007669"/>
    <property type="project" value="UniProtKB-KW"/>
</dbReference>
<dbReference type="GO" id="GO:0009423">
    <property type="term" value="P:chorismate biosynthetic process"/>
    <property type="evidence" value="ECO:0000318"/>
    <property type="project" value="GO_Central"/>
</dbReference>
<dbReference type="GO" id="GO:0019632">
    <property type="term" value="P:shikimate metabolic process"/>
    <property type="evidence" value="ECO:0000318"/>
    <property type="project" value="GO_Central"/>
</dbReference>
<dbReference type="CDD" id="cd01065">
    <property type="entry name" value="NAD_bind_Shikimate_DH"/>
    <property type="match status" value="1"/>
</dbReference>
<dbReference type="FunFam" id="3.40.50.10860:FF:000004">
    <property type="entry name" value="Quinate/shikimate dehydrogenase"/>
    <property type="match status" value="1"/>
</dbReference>
<dbReference type="FunFam" id="3.40.50.720:FF:000505">
    <property type="entry name" value="Shikimate dehydrogenase (NADP(+))"/>
    <property type="match status" value="1"/>
</dbReference>
<dbReference type="Gene3D" id="3.40.50.10860">
    <property type="entry name" value="Leucine Dehydrogenase, chain A, domain 1"/>
    <property type="match status" value="1"/>
</dbReference>
<dbReference type="Gene3D" id="3.40.50.720">
    <property type="entry name" value="NAD(P)-binding Rossmann-like Domain"/>
    <property type="match status" value="1"/>
</dbReference>
<dbReference type="HAMAP" id="MF_00222">
    <property type="entry name" value="Shikimate_DH_AroE"/>
    <property type="match status" value="1"/>
</dbReference>
<dbReference type="InterPro" id="IPR046346">
    <property type="entry name" value="Aminoacid_DH-like_N_sf"/>
</dbReference>
<dbReference type="InterPro" id="IPR036291">
    <property type="entry name" value="NAD(P)-bd_dom_sf"/>
</dbReference>
<dbReference type="InterPro" id="IPR041121">
    <property type="entry name" value="SDH_C"/>
</dbReference>
<dbReference type="InterPro" id="IPR011342">
    <property type="entry name" value="Shikimate_DH"/>
</dbReference>
<dbReference type="InterPro" id="IPR013708">
    <property type="entry name" value="Shikimate_DH-bd_N"/>
</dbReference>
<dbReference type="InterPro" id="IPR022893">
    <property type="entry name" value="Shikimate_DH_fam"/>
</dbReference>
<dbReference type="NCBIfam" id="TIGR00507">
    <property type="entry name" value="aroE"/>
    <property type="match status" value="1"/>
</dbReference>
<dbReference type="NCBIfam" id="NF001315">
    <property type="entry name" value="PRK00258.2-4"/>
    <property type="match status" value="1"/>
</dbReference>
<dbReference type="PANTHER" id="PTHR21089:SF1">
    <property type="entry name" value="BIFUNCTIONAL 3-DEHYDROQUINATE DEHYDRATASE_SHIKIMATE DEHYDROGENASE, CHLOROPLASTIC"/>
    <property type="match status" value="1"/>
</dbReference>
<dbReference type="PANTHER" id="PTHR21089">
    <property type="entry name" value="SHIKIMATE DEHYDROGENASE"/>
    <property type="match status" value="1"/>
</dbReference>
<dbReference type="Pfam" id="PF18317">
    <property type="entry name" value="SDH_C"/>
    <property type="match status" value="1"/>
</dbReference>
<dbReference type="Pfam" id="PF08501">
    <property type="entry name" value="Shikimate_dh_N"/>
    <property type="match status" value="1"/>
</dbReference>
<dbReference type="SUPFAM" id="SSF53223">
    <property type="entry name" value="Aminoacid dehydrogenase-like, N-terminal domain"/>
    <property type="match status" value="1"/>
</dbReference>
<dbReference type="SUPFAM" id="SSF51735">
    <property type="entry name" value="NAD(P)-binding Rossmann-fold domains"/>
    <property type="match status" value="1"/>
</dbReference>
<name>AROE_STRR6</name>
<proteinExistence type="inferred from homology"/>
<evidence type="ECO:0000255" key="1">
    <source>
        <dbReference type="HAMAP-Rule" id="MF_00222"/>
    </source>
</evidence>
<organism>
    <name type="scientific">Streptococcus pneumoniae (strain ATCC BAA-255 / R6)</name>
    <dbReference type="NCBI Taxonomy" id="171101"/>
    <lineage>
        <taxon>Bacteria</taxon>
        <taxon>Bacillati</taxon>
        <taxon>Bacillota</taxon>
        <taxon>Bacilli</taxon>
        <taxon>Lactobacillales</taxon>
        <taxon>Streptococcaceae</taxon>
        <taxon>Streptococcus</taxon>
    </lineage>
</organism>
<reference key="1">
    <citation type="journal article" date="2001" name="J. Bacteriol.">
        <title>Genome of the bacterium Streptococcus pneumoniae strain R6.</title>
        <authorList>
            <person name="Hoskins J."/>
            <person name="Alborn W.E. Jr."/>
            <person name="Arnold J."/>
            <person name="Blaszczak L.C."/>
            <person name="Burgett S."/>
            <person name="DeHoff B.S."/>
            <person name="Estrem S.T."/>
            <person name="Fritz L."/>
            <person name="Fu D.-J."/>
            <person name="Fuller W."/>
            <person name="Geringer C."/>
            <person name="Gilmour R."/>
            <person name="Glass J.S."/>
            <person name="Khoja H."/>
            <person name="Kraft A.R."/>
            <person name="Lagace R.E."/>
            <person name="LeBlanc D.J."/>
            <person name="Lee L.N."/>
            <person name="Lefkowitz E.J."/>
            <person name="Lu J."/>
            <person name="Matsushima P."/>
            <person name="McAhren S.M."/>
            <person name="McHenney M."/>
            <person name="McLeaster K."/>
            <person name="Mundy C.W."/>
            <person name="Nicas T.I."/>
            <person name="Norris F.H."/>
            <person name="O'Gara M."/>
            <person name="Peery R.B."/>
            <person name="Robertson G.T."/>
            <person name="Rockey P."/>
            <person name="Sun P.-M."/>
            <person name="Winkler M.E."/>
            <person name="Yang Y."/>
            <person name="Young-Bellido M."/>
            <person name="Zhao G."/>
            <person name="Zook C.A."/>
            <person name="Baltz R.H."/>
            <person name="Jaskunas S.R."/>
            <person name="Rosteck P.R. Jr."/>
            <person name="Skatrud P.L."/>
            <person name="Glass J.I."/>
        </authorList>
    </citation>
    <scope>NUCLEOTIDE SEQUENCE [LARGE SCALE GENOMIC DNA]</scope>
    <source>
        <strain>ATCC BAA-255 / R6</strain>
    </source>
</reference>